<accession>C4LD49</accession>
<evidence type="ECO:0000255" key="1">
    <source>
        <dbReference type="HAMAP-Rule" id="MF_00152"/>
    </source>
</evidence>
<reference key="1">
    <citation type="submission" date="2009-05" db="EMBL/GenBank/DDBJ databases">
        <title>Complete sequence of Tolumonas auensis DSM 9187.</title>
        <authorList>
            <consortium name="US DOE Joint Genome Institute"/>
            <person name="Lucas S."/>
            <person name="Copeland A."/>
            <person name="Lapidus A."/>
            <person name="Glavina del Rio T."/>
            <person name="Tice H."/>
            <person name="Bruce D."/>
            <person name="Goodwin L."/>
            <person name="Pitluck S."/>
            <person name="Chertkov O."/>
            <person name="Brettin T."/>
            <person name="Detter J.C."/>
            <person name="Han C."/>
            <person name="Larimer F."/>
            <person name="Land M."/>
            <person name="Hauser L."/>
            <person name="Kyrpides N."/>
            <person name="Mikhailova N."/>
            <person name="Spring S."/>
            <person name="Beller H."/>
        </authorList>
    </citation>
    <scope>NUCLEOTIDE SEQUENCE [LARGE SCALE GENOMIC DNA]</scope>
    <source>
        <strain>DSM 9187 / NBRC 110442 / TA 4</strain>
    </source>
</reference>
<organism>
    <name type="scientific">Tolumonas auensis (strain DSM 9187 / NBRC 110442 / TA 4)</name>
    <dbReference type="NCBI Taxonomy" id="595494"/>
    <lineage>
        <taxon>Bacteria</taxon>
        <taxon>Pseudomonadati</taxon>
        <taxon>Pseudomonadota</taxon>
        <taxon>Gammaproteobacteria</taxon>
        <taxon>Aeromonadales</taxon>
        <taxon>Aeromonadaceae</taxon>
        <taxon>Tolumonas</taxon>
    </lineage>
</organism>
<comment type="function">
    <text evidence="1">Endonuclease IV plays a role in DNA repair. It cleaves phosphodiester bonds at apurinic or apyrimidinic (AP) sites, generating a 3'-hydroxyl group and a 5'-terminal sugar phosphate.</text>
</comment>
<comment type="catalytic activity">
    <reaction evidence="1">
        <text>Endonucleolytic cleavage to 5'-phosphooligonucleotide end-products.</text>
        <dbReference type="EC" id="3.1.21.2"/>
    </reaction>
</comment>
<comment type="cofactor">
    <cofactor evidence="1">
        <name>Zn(2+)</name>
        <dbReference type="ChEBI" id="CHEBI:29105"/>
    </cofactor>
    <text evidence="1">Binds 3 Zn(2+) ions.</text>
</comment>
<comment type="similarity">
    <text evidence="1">Belongs to the AP endonuclease 2 family.</text>
</comment>
<gene>
    <name evidence="1" type="primary">nfo</name>
    <name type="ordered locus">Tola_2991</name>
</gene>
<dbReference type="EC" id="3.1.21.2" evidence="1"/>
<dbReference type="EMBL" id="CP001616">
    <property type="protein sequence ID" value="ACQ94580.1"/>
    <property type="molecule type" value="Genomic_DNA"/>
</dbReference>
<dbReference type="RefSeq" id="WP_015880029.1">
    <property type="nucleotide sequence ID" value="NC_012691.1"/>
</dbReference>
<dbReference type="SMR" id="C4LD49"/>
<dbReference type="STRING" id="595494.Tola_2991"/>
<dbReference type="KEGG" id="tau:Tola_2991"/>
<dbReference type="eggNOG" id="COG0648">
    <property type="taxonomic scope" value="Bacteria"/>
</dbReference>
<dbReference type="HOGENOM" id="CLU_025885_0_4_6"/>
<dbReference type="OrthoDB" id="9805666at2"/>
<dbReference type="Proteomes" id="UP000009073">
    <property type="component" value="Chromosome"/>
</dbReference>
<dbReference type="GO" id="GO:0008833">
    <property type="term" value="F:deoxyribonuclease IV (phage-T4-induced) activity"/>
    <property type="evidence" value="ECO:0007669"/>
    <property type="project" value="UniProtKB-UniRule"/>
</dbReference>
<dbReference type="GO" id="GO:0003677">
    <property type="term" value="F:DNA binding"/>
    <property type="evidence" value="ECO:0007669"/>
    <property type="project" value="InterPro"/>
</dbReference>
<dbReference type="GO" id="GO:0003906">
    <property type="term" value="F:DNA-(apurinic or apyrimidinic site) endonuclease activity"/>
    <property type="evidence" value="ECO:0007669"/>
    <property type="project" value="TreeGrafter"/>
</dbReference>
<dbReference type="GO" id="GO:0008081">
    <property type="term" value="F:phosphoric diester hydrolase activity"/>
    <property type="evidence" value="ECO:0007669"/>
    <property type="project" value="TreeGrafter"/>
</dbReference>
<dbReference type="GO" id="GO:0008270">
    <property type="term" value="F:zinc ion binding"/>
    <property type="evidence" value="ECO:0007669"/>
    <property type="project" value="UniProtKB-UniRule"/>
</dbReference>
<dbReference type="GO" id="GO:0006284">
    <property type="term" value="P:base-excision repair"/>
    <property type="evidence" value="ECO:0007669"/>
    <property type="project" value="TreeGrafter"/>
</dbReference>
<dbReference type="CDD" id="cd00019">
    <property type="entry name" value="AP2Ec"/>
    <property type="match status" value="1"/>
</dbReference>
<dbReference type="FunFam" id="3.20.20.150:FF:000001">
    <property type="entry name" value="Probable endonuclease 4"/>
    <property type="match status" value="1"/>
</dbReference>
<dbReference type="Gene3D" id="3.20.20.150">
    <property type="entry name" value="Divalent-metal-dependent TIM barrel enzymes"/>
    <property type="match status" value="1"/>
</dbReference>
<dbReference type="HAMAP" id="MF_00152">
    <property type="entry name" value="Nfo"/>
    <property type="match status" value="1"/>
</dbReference>
<dbReference type="InterPro" id="IPR001719">
    <property type="entry name" value="AP_endonuc_2"/>
</dbReference>
<dbReference type="InterPro" id="IPR018246">
    <property type="entry name" value="AP_endonuc_F2_Zn_BS"/>
</dbReference>
<dbReference type="InterPro" id="IPR036237">
    <property type="entry name" value="Xyl_isomerase-like_sf"/>
</dbReference>
<dbReference type="InterPro" id="IPR013022">
    <property type="entry name" value="Xyl_isomerase-like_TIM-brl"/>
</dbReference>
<dbReference type="NCBIfam" id="TIGR00587">
    <property type="entry name" value="nfo"/>
    <property type="match status" value="1"/>
</dbReference>
<dbReference type="NCBIfam" id="NF002199">
    <property type="entry name" value="PRK01060.1-4"/>
    <property type="match status" value="1"/>
</dbReference>
<dbReference type="PANTHER" id="PTHR21445:SF0">
    <property type="entry name" value="APURINIC-APYRIMIDINIC ENDONUCLEASE"/>
    <property type="match status" value="1"/>
</dbReference>
<dbReference type="PANTHER" id="PTHR21445">
    <property type="entry name" value="ENDONUCLEASE IV ENDODEOXYRIBONUCLEASE IV"/>
    <property type="match status" value="1"/>
</dbReference>
<dbReference type="Pfam" id="PF01261">
    <property type="entry name" value="AP_endonuc_2"/>
    <property type="match status" value="1"/>
</dbReference>
<dbReference type="SMART" id="SM00518">
    <property type="entry name" value="AP2Ec"/>
    <property type="match status" value="1"/>
</dbReference>
<dbReference type="SUPFAM" id="SSF51658">
    <property type="entry name" value="Xylose isomerase-like"/>
    <property type="match status" value="1"/>
</dbReference>
<dbReference type="PROSITE" id="PS00729">
    <property type="entry name" value="AP_NUCLEASE_F2_1"/>
    <property type="match status" value="1"/>
</dbReference>
<dbReference type="PROSITE" id="PS00730">
    <property type="entry name" value="AP_NUCLEASE_F2_2"/>
    <property type="match status" value="1"/>
</dbReference>
<dbReference type="PROSITE" id="PS00731">
    <property type="entry name" value="AP_NUCLEASE_F2_3"/>
    <property type="match status" value="1"/>
</dbReference>
<dbReference type="PROSITE" id="PS51432">
    <property type="entry name" value="AP_NUCLEASE_F2_4"/>
    <property type="match status" value="1"/>
</dbReference>
<protein>
    <recommendedName>
        <fullName evidence="1">Probable endonuclease 4</fullName>
        <ecNumber evidence="1">3.1.21.2</ecNumber>
    </recommendedName>
    <alternativeName>
        <fullName evidence="1">Endodeoxyribonuclease IV</fullName>
    </alternativeName>
    <alternativeName>
        <fullName evidence="1">Endonuclease IV</fullName>
    </alternativeName>
</protein>
<proteinExistence type="inferred from homology"/>
<feature type="chain" id="PRO_1000203443" description="Probable endonuclease 4">
    <location>
        <begin position="1"/>
        <end position="279"/>
    </location>
</feature>
<feature type="binding site" evidence="1">
    <location>
        <position position="69"/>
    </location>
    <ligand>
        <name>Zn(2+)</name>
        <dbReference type="ChEBI" id="CHEBI:29105"/>
        <label>1</label>
    </ligand>
</feature>
<feature type="binding site" evidence="1">
    <location>
        <position position="109"/>
    </location>
    <ligand>
        <name>Zn(2+)</name>
        <dbReference type="ChEBI" id="CHEBI:29105"/>
        <label>1</label>
    </ligand>
</feature>
<feature type="binding site" evidence="1">
    <location>
        <position position="145"/>
    </location>
    <ligand>
        <name>Zn(2+)</name>
        <dbReference type="ChEBI" id="CHEBI:29105"/>
        <label>1</label>
    </ligand>
</feature>
<feature type="binding site" evidence="1">
    <location>
        <position position="145"/>
    </location>
    <ligand>
        <name>Zn(2+)</name>
        <dbReference type="ChEBI" id="CHEBI:29105"/>
        <label>2</label>
    </ligand>
</feature>
<feature type="binding site" evidence="1">
    <location>
        <position position="179"/>
    </location>
    <ligand>
        <name>Zn(2+)</name>
        <dbReference type="ChEBI" id="CHEBI:29105"/>
        <label>2</label>
    </ligand>
</feature>
<feature type="binding site" evidence="1">
    <location>
        <position position="182"/>
    </location>
    <ligand>
        <name>Zn(2+)</name>
        <dbReference type="ChEBI" id="CHEBI:29105"/>
        <label>3</label>
    </ligand>
</feature>
<feature type="binding site" evidence="1">
    <location>
        <position position="216"/>
    </location>
    <ligand>
        <name>Zn(2+)</name>
        <dbReference type="ChEBI" id="CHEBI:29105"/>
        <label>2</label>
    </ligand>
</feature>
<feature type="binding site" evidence="1">
    <location>
        <position position="229"/>
    </location>
    <ligand>
        <name>Zn(2+)</name>
        <dbReference type="ChEBI" id="CHEBI:29105"/>
        <label>3</label>
    </ligand>
</feature>
<feature type="binding site" evidence="1">
    <location>
        <position position="231"/>
    </location>
    <ligand>
        <name>Zn(2+)</name>
        <dbReference type="ChEBI" id="CHEBI:29105"/>
        <label>3</label>
    </ligand>
</feature>
<feature type="binding site" evidence="1">
    <location>
        <position position="261"/>
    </location>
    <ligand>
        <name>Zn(2+)</name>
        <dbReference type="ChEBI" id="CHEBI:29105"/>
        <label>2</label>
    </ligand>
</feature>
<sequence length="279" mass="31106">MKYIGAHVSAAGGIELAVERAVAIGANAFALFTKNQRQWHAPDLTAKTILAFRTACETAGFLPEQILPHDSYLINLGHPEPEALEKSRVAFIDEMQRCEQLGLCYLNFHPGSHLKAISEEESLRRVAESINIALDQTQGVTAVIENTAGQGTNLGWQFEHLAAIIDQVEDKSRVGVCYDTCHAFAAGYDMRTEADCIATFAEFERVVGFNYLKGMHINGAKCTFGSRVDRHHSLQEGNLGTAVFEFIMRDSRFDRIPLILETVNPDIWPDEIRWLRQLG</sequence>
<keyword id="KW-0227">DNA damage</keyword>
<keyword id="KW-0234">DNA repair</keyword>
<keyword id="KW-0255">Endonuclease</keyword>
<keyword id="KW-0378">Hydrolase</keyword>
<keyword id="KW-0479">Metal-binding</keyword>
<keyword id="KW-0540">Nuclease</keyword>
<keyword id="KW-1185">Reference proteome</keyword>
<keyword id="KW-0862">Zinc</keyword>
<name>END4_TOLAT</name>